<protein>
    <recommendedName>
        <fullName evidence="1">NADH-quinone oxidoreductase subunit D</fullName>
        <ecNumber evidence="1">7.1.1.-</ecNumber>
    </recommendedName>
    <alternativeName>
        <fullName evidence="1">NADH dehydrogenase I subunit D</fullName>
    </alternativeName>
    <alternativeName>
        <fullName evidence="1">NDH-1 subunit D</fullName>
    </alternativeName>
</protein>
<dbReference type="EC" id="7.1.1.-" evidence="1"/>
<dbReference type="EMBL" id="AM494475">
    <property type="protein sequence ID" value="CAM80725.1"/>
    <property type="molecule type" value="Genomic_DNA"/>
</dbReference>
<dbReference type="RefSeq" id="WP_011944979.1">
    <property type="nucleotide sequence ID" value="NC_009488.1"/>
</dbReference>
<dbReference type="SMR" id="A5CES2"/>
<dbReference type="KEGG" id="ots:OTBS_1630"/>
<dbReference type="eggNOG" id="COG0649">
    <property type="taxonomic scope" value="Bacteria"/>
</dbReference>
<dbReference type="HOGENOM" id="CLU_015134_1_2_5"/>
<dbReference type="Proteomes" id="UP000001565">
    <property type="component" value="Chromosome"/>
</dbReference>
<dbReference type="GO" id="GO:0005886">
    <property type="term" value="C:plasma membrane"/>
    <property type="evidence" value="ECO:0007669"/>
    <property type="project" value="UniProtKB-SubCell"/>
</dbReference>
<dbReference type="GO" id="GO:0051287">
    <property type="term" value="F:NAD binding"/>
    <property type="evidence" value="ECO:0007669"/>
    <property type="project" value="InterPro"/>
</dbReference>
<dbReference type="GO" id="GO:0050136">
    <property type="term" value="F:NADH:ubiquinone reductase (non-electrogenic) activity"/>
    <property type="evidence" value="ECO:0007669"/>
    <property type="project" value="UniProtKB-UniRule"/>
</dbReference>
<dbReference type="GO" id="GO:0048038">
    <property type="term" value="F:quinone binding"/>
    <property type="evidence" value="ECO:0007669"/>
    <property type="project" value="UniProtKB-KW"/>
</dbReference>
<dbReference type="FunFam" id="1.10.645.10:FF:000005">
    <property type="entry name" value="NADH-quinone oxidoreductase subunit D"/>
    <property type="match status" value="1"/>
</dbReference>
<dbReference type="Gene3D" id="1.10.645.10">
    <property type="entry name" value="Cytochrome-c3 Hydrogenase, chain B"/>
    <property type="match status" value="1"/>
</dbReference>
<dbReference type="HAMAP" id="MF_01358">
    <property type="entry name" value="NDH1_NuoD"/>
    <property type="match status" value="1"/>
</dbReference>
<dbReference type="InterPro" id="IPR001135">
    <property type="entry name" value="NADH_Q_OxRdtase_suD"/>
</dbReference>
<dbReference type="InterPro" id="IPR014029">
    <property type="entry name" value="NADH_UbQ_OxRdtase_49kDa_CS"/>
</dbReference>
<dbReference type="InterPro" id="IPR022885">
    <property type="entry name" value="NDH1_su_D/H"/>
</dbReference>
<dbReference type="InterPro" id="IPR029014">
    <property type="entry name" value="NiFe-Hase_large"/>
</dbReference>
<dbReference type="NCBIfam" id="TIGR01962">
    <property type="entry name" value="NuoD"/>
    <property type="match status" value="1"/>
</dbReference>
<dbReference type="NCBIfam" id="NF004739">
    <property type="entry name" value="PRK06075.1"/>
    <property type="match status" value="1"/>
</dbReference>
<dbReference type="PANTHER" id="PTHR11993:SF10">
    <property type="entry name" value="NADH DEHYDROGENASE [UBIQUINONE] IRON-SULFUR PROTEIN 2, MITOCHONDRIAL"/>
    <property type="match status" value="1"/>
</dbReference>
<dbReference type="PANTHER" id="PTHR11993">
    <property type="entry name" value="NADH-UBIQUINONE OXIDOREDUCTASE 49 KDA SUBUNIT"/>
    <property type="match status" value="1"/>
</dbReference>
<dbReference type="Pfam" id="PF00346">
    <property type="entry name" value="Complex1_49kDa"/>
    <property type="match status" value="1"/>
</dbReference>
<dbReference type="SUPFAM" id="SSF56762">
    <property type="entry name" value="HydB/Nqo4-like"/>
    <property type="match status" value="1"/>
</dbReference>
<dbReference type="PROSITE" id="PS00535">
    <property type="entry name" value="COMPLEX1_49K"/>
    <property type="match status" value="1"/>
</dbReference>
<comment type="function">
    <text evidence="1">NDH-1 shuttles electrons from NADH, via FMN and iron-sulfur (Fe-S) centers, to quinones in the respiratory chain. The immediate electron acceptor for the enzyme in this species is believed to be ubiquinone. Couples the redox reaction to proton translocation (for every two electrons transferred, four hydrogen ions are translocated across the cytoplasmic membrane), and thus conserves the redox energy in a proton gradient.</text>
</comment>
<comment type="catalytic activity">
    <reaction evidence="1">
        <text>a quinone + NADH + 5 H(+)(in) = a quinol + NAD(+) + 4 H(+)(out)</text>
        <dbReference type="Rhea" id="RHEA:57888"/>
        <dbReference type="ChEBI" id="CHEBI:15378"/>
        <dbReference type="ChEBI" id="CHEBI:24646"/>
        <dbReference type="ChEBI" id="CHEBI:57540"/>
        <dbReference type="ChEBI" id="CHEBI:57945"/>
        <dbReference type="ChEBI" id="CHEBI:132124"/>
    </reaction>
</comment>
<comment type="subunit">
    <text evidence="1">NDH-1 is composed of 14 different subunits. Subunits NuoB, C, D, E, F, and G constitute the peripheral sector of the complex.</text>
</comment>
<comment type="subcellular location">
    <subcellularLocation>
        <location evidence="1">Cell inner membrane</location>
        <topology evidence="1">Peripheral membrane protein</topology>
        <orientation evidence="1">Cytoplasmic side</orientation>
    </subcellularLocation>
</comment>
<comment type="similarity">
    <text evidence="1">Belongs to the complex I 49 kDa subunit family.</text>
</comment>
<organism>
    <name type="scientific">Orientia tsutsugamushi (strain Boryong)</name>
    <name type="common">Rickettsia tsutsugamushi</name>
    <dbReference type="NCBI Taxonomy" id="357244"/>
    <lineage>
        <taxon>Bacteria</taxon>
        <taxon>Pseudomonadati</taxon>
        <taxon>Pseudomonadota</taxon>
        <taxon>Alphaproteobacteria</taxon>
        <taxon>Rickettsiales</taxon>
        <taxon>Rickettsiaceae</taxon>
        <taxon>Rickettsieae</taxon>
        <taxon>Orientia</taxon>
    </lineage>
</organism>
<gene>
    <name evidence="1" type="primary">nuoD</name>
    <name type="ordered locus">OTBS_1630</name>
</gene>
<reference key="1">
    <citation type="journal article" date="2007" name="Proc. Natl. Acad. Sci. U.S.A.">
        <title>The Orientia tsutsugamushi genome reveals massive proliferation of conjugative type IV secretion system and host-cell interaction genes.</title>
        <authorList>
            <person name="Cho N.-H."/>
            <person name="Kim H.-R."/>
            <person name="Lee J.-H."/>
            <person name="Kim S.-Y."/>
            <person name="Kim J."/>
            <person name="Cha S."/>
            <person name="Kim S.-Y."/>
            <person name="Darby A.C."/>
            <person name="Fuxelius H.-H."/>
            <person name="Yin J."/>
            <person name="Kim J.H."/>
            <person name="Kim J."/>
            <person name="Lee S.J."/>
            <person name="Koh Y.-S."/>
            <person name="Jang W.-J."/>
            <person name="Park K.-H."/>
            <person name="Andersson S.G.E."/>
            <person name="Choi M.-S."/>
            <person name="Kim I.-S."/>
        </authorList>
    </citation>
    <scope>NUCLEOTIDE SEQUENCE [LARGE SCALE GENOMIC DNA]</scope>
    <source>
        <strain>Boryong</strain>
    </source>
</reference>
<proteinExistence type="inferred from homology"/>
<sequence>MALKKRSKHSKKFKLNLGPQHPATHGVLRLILEMDGEIVERADPHIGLLHRGTEKLIEYKTYLQAIPYFDRLDYVSPMCQEHAFALAIEHLLKCEVPLRAQYIRVMFSELTRILNHTLNIATQALDVGATTPLLWMFEEREKIMEFYERVSGSRLHANYFRPGGVAQDLPEGLIENIVDFCEQFPCKIADLETLLTDNRIWKQRTVDIGIVSKQQAMDWGFSGVMLRGSGIAWDLRKSQPYDQYANLDFDVAIGKNGDCYDRYLIRIEEMYQSIKIIKQCIQKMPVGEIKTQDPSISPPKRSEIKKSMEALINHFKLYSEGYNVPAGEVYAAVEAPKGEFGVYLYSDGTNRPYRCRIKAPGFAHLQGLDFMARGHSLSDIITIIATLDIVFGEIDR</sequence>
<evidence type="ECO:0000255" key="1">
    <source>
        <dbReference type="HAMAP-Rule" id="MF_01358"/>
    </source>
</evidence>
<keyword id="KW-0997">Cell inner membrane</keyword>
<keyword id="KW-1003">Cell membrane</keyword>
<keyword id="KW-0472">Membrane</keyword>
<keyword id="KW-0520">NAD</keyword>
<keyword id="KW-0874">Quinone</keyword>
<keyword id="KW-1185">Reference proteome</keyword>
<keyword id="KW-1278">Translocase</keyword>
<keyword id="KW-0813">Transport</keyword>
<keyword id="KW-0830">Ubiquinone</keyword>
<feature type="chain" id="PRO_0000357880" description="NADH-quinone oxidoreductase subunit D">
    <location>
        <begin position="1"/>
        <end position="396"/>
    </location>
</feature>
<name>NUOD_ORITB</name>
<accession>A5CES2</accession>